<proteinExistence type="evidence at transcript level"/>
<comment type="function">
    <text evidence="1">Since they lack a putative transactivation domain, the small Mafs behave as transcriptional repressors when they dimerize among themselves. However, they seem to serve as transcriptional activators by dimerizing with other (usually larger) basic-zipper proteins, such as NFE2L1/NRF1, and recruiting them to specific DNA-binding sites. Interacts with the upstream promoter region of the oxytocin receptor gene. May be a transcriptional enhancer in the up-regulation of the oxytocin receptor gene at parturition.</text>
</comment>
<comment type="subunit">
    <text evidence="1">Monomer and homo- or heterodimer. Interacts with MIP. Forms high affinity heterodimers with members of the CNC-bZIP family such as NFE2L1/NRF1.</text>
</comment>
<comment type="subcellular location">
    <subcellularLocation>
        <location evidence="2">Nucleus</location>
    </subcellularLocation>
</comment>
<comment type="tissue specificity">
    <text>Highly expressed in the lung, lower expression in the brain, thymus, liver, spleen, intestine, kidney, heart, muscle, and ovary. Not significantly expressed in hematopoietic cells.</text>
</comment>
<comment type="developmental stage">
    <text evidence="3">Detected at 6.5 dpc in the boundary between the extraembryonic and embryonic regions. At 8.5 dpc, weakly expressed in the future gut, allantois, yolk sac endoderm and the ectoplacental cone. At 9.5 dpc, strong expression in the primordial gut and presumptive fetal liver, in the floorplate of the myelencephalon, neural crest cells, spongiotrophoblasts, and giant cells of the placenta. At 12.5 dpc, detected in hepotocytes, in the outflow tract of the heart in a specific subset of dorsal root ganglia, in the cranial nerve ganglia, in the lung primordium, and in the epithelium of the expiratory tract. In newborn, strongly expressed in keratinocytes, in the cartilage, in bronchial epithelia, and bone membrane.</text>
</comment>
<comment type="similarity">
    <text evidence="4">Belongs to the bZIP family. Maf subfamily.</text>
</comment>
<name>MAFF_MOUSE</name>
<reference key="1">
    <citation type="journal article" date="1999" name="J. Biol. Chem.">
        <title>Characterization of the murine mafF gene.</title>
        <authorList>
            <person name="Onodera K."/>
            <person name="Shavit J.A."/>
            <person name="Motohashi H."/>
            <person name="Katsuoka F."/>
            <person name="Akasaka J.-E."/>
            <person name="Engel J.D."/>
            <person name="Yamamoto M."/>
        </authorList>
    </citation>
    <scope>NUCLEOTIDE SEQUENCE [GENOMIC DNA]</scope>
    <scope>DEVELOPMENTAL STAGE</scope>
    <source>
        <strain>129/SvJ</strain>
    </source>
</reference>
<reference key="2">
    <citation type="journal article" date="2004" name="Genome Res.">
        <title>The status, quality, and expansion of the NIH full-length cDNA project: the Mammalian Gene Collection (MGC).</title>
        <authorList>
            <consortium name="The MGC Project Team"/>
        </authorList>
    </citation>
    <scope>NUCLEOTIDE SEQUENCE [LARGE SCALE MRNA]</scope>
    <source>
        <tissue>Liver</tissue>
    </source>
</reference>
<accession>O54791</accession>
<feature type="chain" id="PRO_0000076498" description="Transcription factor MafF">
    <location>
        <begin position="1"/>
        <end position="156"/>
    </location>
</feature>
<feature type="domain" description="bZIP" evidence="2">
    <location>
        <begin position="51"/>
        <end position="114"/>
    </location>
</feature>
<feature type="region of interest" description="Basic motif" evidence="2">
    <location>
        <begin position="51"/>
        <end position="76"/>
    </location>
</feature>
<feature type="region of interest" description="Leucine-zipper" evidence="2">
    <location>
        <begin position="79"/>
        <end position="93"/>
    </location>
</feature>
<organism>
    <name type="scientific">Mus musculus</name>
    <name type="common">Mouse</name>
    <dbReference type="NCBI Taxonomy" id="10090"/>
    <lineage>
        <taxon>Eukaryota</taxon>
        <taxon>Metazoa</taxon>
        <taxon>Chordata</taxon>
        <taxon>Craniata</taxon>
        <taxon>Vertebrata</taxon>
        <taxon>Euteleostomi</taxon>
        <taxon>Mammalia</taxon>
        <taxon>Eutheria</taxon>
        <taxon>Euarchontoglires</taxon>
        <taxon>Glires</taxon>
        <taxon>Rodentia</taxon>
        <taxon>Myomorpha</taxon>
        <taxon>Muroidea</taxon>
        <taxon>Muridae</taxon>
        <taxon>Murinae</taxon>
        <taxon>Mus</taxon>
        <taxon>Mus</taxon>
    </lineage>
</organism>
<gene>
    <name type="primary">Maff</name>
</gene>
<protein>
    <recommendedName>
        <fullName>Transcription factor MafF</fullName>
    </recommendedName>
    <alternativeName>
        <fullName>V-maf musculoaponeurotic fibrosarcoma oncogene homolog F</fullName>
    </alternativeName>
</protein>
<dbReference type="EMBL" id="AB009694">
    <property type="protein sequence ID" value="BAA24029.1"/>
    <property type="molecule type" value="Genomic_DNA"/>
</dbReference>
<dbReference type="EMBL" id="BC022952">
    <property type="protein sequence ID" value="AAH22952.1"/>
    <property type="molecule type" value="mRNA"/>
</dbReference>
<dbReference type="CCDS" id="CCDS27638.1"/>
<dbReference type="RefSeq" id="NP_001291759.1">
    <property type="nucleotide sequence ID" value="NM_001304830.2"/>
</dbReference>
<dbReference type="RefSeq" id="NP_001291760.2">
    <property type="nucleotide sequence ID" value="NM_001304831.2"/>
</dbReference>
<dbReference type="RefSeq" id="NP_001291761.2">
    <property type="nucleotide sequence ID" value="NM_001304832.3"/>
</dbReference>
<dbReference type="RefSeq" id="NP_034885.1">
    <property type="nucleotide sequence ID" value="NM_010755.5"/>
</dbReference>
<dbReference type="RefSeq" id="XP_006520609.2">
    <property type="nucleotide sequence ID" value="XM_006520546.3"/>
</dbReference>
<dbReference type="RefSeq" id="XP_006520613.1">
    <property type="nucleotide sequence ID" value="XM_006520550.5"/>
</dbReference>
<dbReference type="RefSeq" id="XP_011243786.1">
    <property type="nucleotide sequence ID" value="XM_011245484.2"/>
</dbReference>
<dbReference type="RefSeq" id="XP_036015106.1">
    <property type="nucleotide sequence ID" value="XM_036159213.1"/>
</dbReference>
<dbReference type="SMR" id="O54791"/>
<dbReference type="BioGRID" id="201282">
    <property type="interactions" value="2"/>
</dbReference>
<dbReference type="FunCoup" id="O54791">
    <property type="interactions" value="1948"/>
</dbReference>
<dbReference type="IntAct" id="O54791">
    <property type="interactions" value="1"/>
</dbReference>
<dbReference type="STRING" id="10090.ENSMUSP00000094076"/>
<dbReference type="ChEMBL" id="CHEMBL5291556"/>
<dbReference type="iPTMnet" id="O54791"/>
<dbReference type="PhosphoSitePlus" id="O54791"/>
<dbReference type="PaxDb" id="10090-ENSMUSP00000094076"/>
<dbReference type="PeptideAtlas" id="O54791"/>
<dbReference type="ProteomicsDB" id="295776"/>
<dbReference type="Pumba" id="O54791"/>
<dbReference type="Antibodypedia" id="12337">
    <property type="antibodies" value="153 antibodies from 31 providers"/>
</dbReference>
<dbReference type="DNASU" id="17133"/>
<dbReference type="Ensembl" id="ENSMUST00000096350.11">
    <property type="protein sequence ID" value="ENSMUSP00000094076.4"/>
    <property type="gene ID" value="ENSMUSG00000042622.15"/>
</dbReference>
<dbReference type="Ensembl" id="ENSMUST00000163691.3">
    <property type="protein sequence ID" value="ENSMUSP00000131628.2"/>
    <property type="gene ID" value="ENSMUSG00000042622.15"/>
</dbReference>
<dbReference type="Ensembl" id="ENSMUST00000229130.2">
    <property type="protein sequence ID" value="ENSMUSP00000154850.2"/>
    <property type="gene ID" value="ENSMUSG00000042622.15"/>
</dbReference>
<dbReference type="GeneID" id="17133"/>
<dbReference type="KEGG" id="mmu:17133"/>
<dbReference type="UCSC" id="uc007wth.2">
    <property type="organism name" value="mouse"/>
</dbReference>
<dbReference type="AGR" id="MGI:96910"/>
<dbReference type="CTD" id="23764"/>
<dbReference type="MGI" id="MGI:96910">
    <property type="gene designation" value="Maff"/>
</dbReference>
<dbReference type="VEuPathDB" id="HostDB:ENSMUSG00000042622"/>
<dbReference type="eggNOG" id="KOG4196">
    <property type="taxonomic scope" value="Eukaryota"/>
</dbReference>
<dbReference type="GeneTree" id="ENSGT00940000161112"/>
<dbReference type="HOGENOM" id="CLU_112948_0_1_1"/>
<dbReference type="InParanoid" id="O54791"/>
<dbReference type="OMA" id="CDFQAPL"/>
<dbReference type="OrthoDB" id="5974330at2759"/>
<dbReference type="PhylomeDB" id="O54791"/>
<dbReference type="TreeFam" id="TF325689"/>
<dbReference type="Reactome" id="R-MMU-983231">
    <property type="pathway name" value="Factors involved in megakaryocyte development and platelet production"/>
</dbReference>
<dbReference type="BioGRID-ORCS" id="17133">
    <property type="hits" value="1 hit in 60 CRISPR screens"/>
</dbReference>
<dbReference type="ChiTaRS" id="Maff">
    <property type="organism name" value="mouse"/>
</dbReference>
<dbReference type="PRO" id="PR:O54791"/>
<dbReference type="Proteomes" id="UP000000589">
    <property type="component" value="Chromosome 15"/>
</dbReference>
<dbReference type="RNAct" id="O54791">
    <property type="molecule type" value="protein"/>
</dbReference>
<dbReference type="Bgee" id="ENSMUSG00000042622">
    <property type="expression patterns" value="Expressed in aortic valve and 162 other cell types or tissues"/>
</dbReference>
<dbReference type="ExpressionAtlas" id="O54791">
    <property type="expression patterns" value="baseline and differential"/>
</dbReference>
<dbReference type="GO" id="GO:0005739">
    <property type="term" value="C:mitochondrion"/>
    <property type="evidence" value="ECO:0007669"/>
    <property type="project" value="Ensembl"/>
</dbReference>
<dbReference type="GO" id="GO:0005654">
    <property type="term" value="C:nucleoplasm"/>
    <property type="evidence" value="ECO:0000304"/>
    <property type="project" value="Reactome"/>
</dbReference>
<dbReference type="GO" id="GO:0090575">
    <property type="term" value="C:RNA polymerase II transcription regulator complex"/>
    <property type="evidence" value="ECO:0007669"/>
    <property type="project" value="Ensembl"/>
</dbReference>
<dbReference type="GO" id="GO:0001228">
    <property type="term" value="F:DNA-binding transcription activator activity, RNA polymerase II-specific"/>
    <property type="evidence" value="ECO:0007669"/>
    <property type="project" value="Ensembl"/>
</dbReference>
<dbReference type="GO" id="GO:1990837">
    <property type="term" value="F:sequence-specific double-stranded DNA binding"/>
    <property type="evidence" value="ECO:0007669"/>
    <property type="project" value="Ensembl"/>
</dbReference>
<dbReference type="GO" id="GO:0001701">
    <property type="term" value="P:in utero embryonic development"/>
    <property type="evidence" value="ECO:0000316"/>
    <property type="project" value="MGI"/>
</dbReference>
<dbReference type="GO" id="GO:0045604">
    <property type="term" value="P:regulation of epidermal cell differentiation"/>
    <property type="evidence" value="ECO:0000316"/>
    <property type="project" value="MGI"/>
</dbReference>
<dbReference type="GO" id="GO:0035914">
    <property type="term" value="P:skeletal muscle cell differentiation"/>
    <property type="evidence" value="ECO:0000315"/>
    <property type="project" value="MGI"/>
</dbReference>
<dbReference type="CDD" id="cd14717">
    <property type="entry name" value="bZIP_Maf_small"/>
    <property type="match status" value="1"/>
</dbReference>
<dbReference type="FunFam" id="1.20.5.170:FF:000011">
    <property type="entry name" value="Transcription factor MafG, putative"/>
    <property type="match status" value="1"/>
</dbReference>
<dbReference type="Gene3D" id="1.20.5.170">
    <property type="match status" value="1"/>
</dbReference>
<dbReference type="InterPro" id="IPR004827">
    <property type="entry name" value="bZIP"/>
</dbReference>
<dbReference type="InterPro" id="IPR004826">
    <property type="entry name" value="bZIP_Maf"/>
</dbReference>
<dbReference type="InterPro" id="IPR046347">
    <property type="entry name" value="bZIP_sf"/>
</dbReference>
<dbReference type="InterPro" id="IPR008917">
    <property type="entry name" value="TF_DNA-bd_sf"/>
</dbReference>
<dbReference type="InterPro" id="IPR024874">
    <property type="entry name" value="Transcription_factor_Maf_fam"/>
</dbReference>
<dbReference type="PANTHER" id="PTHR10129">
    <property type="entry name" value="TRANSCRIPTION FACTOR MAF"/>
    <property type="match status" value="1"/>
</dbReference>
<dbReference type="PANTHER" id="PTHR10129:SF25">
    <property type="entry name" value="TRANSCRIPTION FACTOR MAFF"/>
    <property type="match status" value="1"/>
</dbReference>
<dbReference type="Pfam" id="PF03131">
    <property type="entry name" value="bZIP_Maf"/>
    <property type="match status" value="1"/>
</dbReference>
<dbReference type="SMART" id="SM00338">
    <property type="entry name" value="BRLZ"/>
    <property type="match status" value="1"/>
</dbReference>
<dbReference type="SUPFAM" id="SSF47454">
    <property type="entry name" value="A DNA-binding domain in eukaryotic transcription factors"/>
    <property type="match status" value="1"/>
</dbReference>
<dbReference type="SUPFAM" id="SSF57959">
    <property type="entry name" value="Leucine zipper domain"/>
    <property type="match status" value="1"/>
</dbReference>
<dbReference type="PROSITE" id="PS50217">
    <property type="entry name" value="BZIP"/>
    <property type="match status" value="1"/>
</dbReference>
<sequence>MAVDPLSSKALKVKRELSENTPHLSDEALMGLSVRELNRNLRGLSAEEVTRLKQRRRTLKNRGYAASCRVKRVCQKEELQKQKSELEREVDKLARENAAMRLELDALRGKCEALQGFARSVAAARGPAALVAPASVITIVKSAPGPAPAADPAPCS</sequence>
<evidence type="ECO:0000250" key="1">
    <source>
        <dbReference type="UniProtKB" id="Q9ULX9"/>
    </source>
</evidence>
<evidence type="ECO:0000255" key="2">
    <source>
        <dbReference type="PROSITE-ProRule" id="PRU00978"/>
    </source>
</evidence>
<evidence type="ECO:0000269" key="3">
    <source>
    </source>
</evidence>
<evidence type="ECO:0000305" key="4"/>
<keyword id="KW-0238">DNA-binding</keyword>
<keyword id="KW-0539">Nucleus</keyword>
<keyword id="KW-1185">Reference proteome</keyword>
<keyword id="KW-0678">Repressor</keyword>
<keyword id="KW-0804">Transcription</keyword>
<keyword id="KW-0805">Transcription regulation</keyword>